<protein>
    <recommendedName>
        <fullName>Chemerin-like receptor 1</fullName>
    </recommendedName>
    <alternativeName>
        <fullName>Chemokine-like receptor 1</fullName>
    </alternativeName>
    <alternativeName>
        <fullName>G-protein coupled chemoattractant-like receptor</fullName>
    </alternativeName>
    <alternativeName>
        <fullName>G-protein coupled receptor DEZ</fullName>
    </alternativeName>
</protein>
<gene>
    <name type="primary">Cmklr1</name>
    <name type="synonym">Dez</name>
</gene>
<proteinExistence type="evidence at protein level"/>
<evidence type="ECO:0000250" key="1">
    <source>
        <dbReference type="UniProtKB" id="P97468"/>
    </source>
</evidence>
<evidence type="ECO:0000250" key="2">
    <source>
        <dbReference type="UniProtKB" id="Q99788"/>
    </source>
</evidence>
<evidence type="ECO:0000255" key="3"/>
<evidence type="ECO:0000255" key="4">
    <source>
        <dbReference type="PROSITE-ProRule" id="PRU00521"/>
    </source>
</evidence>
<evidence type="ECO:0000269" key="5">
    <source>
    </source>
</evidence>
<evidence type="ECO:0000305" key="6"/>
<evidence type="ECO:0007744" key="7">
    <source>
    </source>
</evidence>
<sequence length="372" mass="41865">MEYEGYNDSSIYGEEYSDGSDYIVDLEEAGPLEAKVAEVFLVVIYSLVCFLGILGNGLVIVIATFKMKKTVNTVWFVNLAVADFLFNIFLPIHITYAAMDYHWVFGKAMCKISSFLLSHNMYTSVFLLTVISFDRCISVLLPVWSQNHRSVRLAYMTCVVVWVLAFFLSSPSLVFRDTVSTSHGKITCFNNFSLAAPEPFSHSTHPRTDPVGYSRHVAVTVTRFLCGFLIPVFIITACYLTIVFKLQRNRLAKTKKPFKIIITIIITFFLCWCPYHTLYLLELHHTAVPASVFSLGLPLATAVAIANSCMNPILYVFMGHDFKKFKVALFSRLVNALSEDTGPSSYPSHRSFTKMSSLIEKASVNEKETSTL</sequence>
<comment type="function">
    <text evidence="2">Receptor for the chemoattractant adipokine chemerin/RARRES2 and for the omega-3 fatty acid derived molecule resolvin E1. Interaction with RARRES2 initiates activation of G proteins G(i)/G(o) and beta-arrestin pathways inducing cellular responses via second messenger pathways such as intracellular calcium mobilization, phosphorylation of MAP kinases MAPK1/MAPK3 (ERK1/2), TYRO3, MAPK14/P38MAPK and PI3K leading to multifunctional effects, like, reduction of immune responses, enhancing of adipogenesis and angionesis. Resolvin E1 down-regulates cytokine production in macrophages by reducing the activation of MAPK1/3 (ERK1/2) and NF-kappa-B. Positively regulates adipogenesis and adipocyte metabolism (By similarity).</text>
</comment>
<comment type="subcellular location">
    <subcellularLocation>
        <location evidence="2">Cell membrane</location>
        <topology evidence="3">Multi-pass membrane protein</topology>
    </subcellularLocation>
</comment>
<comment type="tissue specificity">
    <text evidence="5">High expression in heart and lung, low in small intestines, colon, kidney, liver, uterus and brain.</text>
</comment>
<comment type="similarity">
    <text evidence="6">Belongs to the chemokine-like receptor (CMKLR) family.</text>
</comment>
<keyword id="KW-1003">Cell membrane</keyword>
<keyword id="KW-1015">Disulfide bond</keyword>
<keyword id="KW-0297">G-protein coupled receptor</keyword>
<keyword id="KW-0325">Glycoprotein</keyword>
<keyword id="KW-0472">Membrane</keyword>
<keyword id="KW-0597">Phosphoprotein</keyword>
<keyword id="KW-0675">Receptor</keyword>
<keyword id="KW-1185">Reference proteome</keyword>
<keyword id="KW-0807">Transducer</keyword>
<keyword id="KW-0812">Transmembrane</keyword>
<keyword id="KW-1133">Transmembrane helix</keyword>
<feature type="chain" id="PRO_0000069309" description="Chemerin-like receptor 1">
    <location>
        <begin position="1"/>
        <end position="372"/>
    </location>
</feature>
<feature type="topological domain" description="Extracellular" evidence="3">
    <location>
        <begin position="1"/>
        <end position="39"/>
    </location>
</feature>
<feature type="transmembrane region" description="Helical; Name=1" evidence="3">
    <location>
        <begin position="40"/>
        <end position="62"/>
    </location>
</feature>
<feature type="topological domain" description="Cytoplasmic" evidence="3">
    <location>
        <begin position="63"/>
        <end position="73"/>
    </location>
</feature>
<feature type="transmembrane region" description="Helical; Name=2" evidence="3">
    <location>
        <begin position="74"/>
        <end position="95"/>
    </location>
</feature>
<feature type="topological domain" description="Extracellular" evidence="3">
    <location>
        <begin position="96"/>
        <end position="112"/>
    </location>
</feature>
<feature type="transmembrane region" description="Helical; Name=3" evidence="3">
    <location>
        <begin position="113"/>
        <end position="133"/>
    </location>
</feature>
<feature type="topological domain" description="Cytoplasmic" evidence="3">
    <location>
        <begin position="134"/>
        <end position="152"/>
    </location>
</feature>
<feature type="transmembrane region" description="Helical; Name=4" evidence="3">
    <location>
        <begin position="153"/>
        <end position="174"/>
    </location>
</feature>
<feature type="topological domain" description="Extracellular" evidence="3">
    <location>
        <begin position="175"/>
        <end position="223"/>
    </location>
</feature>
<feature type="transmembrane region" description="Helical; Name=5" evidence="3">
    <location>
        <begin position="224"/>
        <end position="244"/>
    </location>
</feature>
<feature type="topological domain" description="Cytoplasmic" evidence="3">
    <location>
        <begin position="245"/>
        <end position="260"/>
    </location>
</feature>
<feature type="transmembrane region" description="Helical; Name=6" evidence="3">
    <location>
        <begin position="261"/>
        <end position="281"/>
    </location>
</feature>
<feature type="topological domain" description="Extracellular" evidence="3">
    <location>
        <begin position="282"/>
        <end position="299"/>
    </location>
</feature>
<feature type="transmembrane region" description="Helical; Name=7" evidence="3">
    <location>
        <begin position="300"/>
        <end position="319"/>
    </location>
</feature>
<feature type="topological domain" description="Cytoplasmic" evidence="3">
    <location>
        <begin position="320"/>
        <end position="372"/>
    </location>
</feature>
<feature type="modified residue" description="Phosphoserine" evidence="7">
    <location>
        <position position="338"/>
    </location>
</feature>
<feature type="modified residue" description="Phosphothreonine" evidence="7">
    <location>
        <position position="341"/>
    </location>
</feature>
<feature type="modified residue" description="Phosphoserine" evidence="7">
    <location>
        <position position="348"/>
    </location>
</feature>
<feature type="modified residue" description="Phosphoserine" evidence="1">
    <location>
        <position position="351"/>
    </location>
</feature>
<feature type="modified residue" description="Phosphoserine" evidence="7">
    <location>
        <position position="357"/>
    </location>
</feature>
<feature type="modified residue" description="Phosphothreonine" evidence="1">
    <location>
        <position position="371"/>
    </location>
</feature>
<feature type="glycosylation site" description="N-linked (GlcNAc...) asparagine" evidence="3">
    <location>
        <position position="7"/>
    </location>
</feature>
<feature type="glycosylation site" description="N-linked (GlcNAc...) asparagine" evidence="3">
    <location>
        <position position="191"/>
    </location>
</feature>
<feature type="disulfide bond" evidence="4">
    <location>
        <begin position="110"/>
        <end position="188"/>
    </location>
</feature>
<feature type="sequence conflict" description="In Ref. 1; CAA05715." evidence="6" ref="1">
    <original>LAFFLSS</original>
    <variation>WLSSESP</variation>
    <location>
        <begin position="164"/>
        <end position="170"/>
    </location>
</feature>
<feature type="sequence conflict" description="In Ref. 1; CAA05715." ref="1">
    <original>RDT</original>
    <variation>GH</variation>
    <location>
        <begin position="176"/>
        <end position="178"/>
    </location>
</feature>
<feature type="sequence conflict" description="In Ref. 1; CAA05715." ref="1">
    <original>L</original>
    <variation>Q</variation>
    <location>
        <position position="251"/>
    </location>
</feature>
<organism>
    <name type="scientific">Rattus norvegicus</name>
    <name type="common">Rat</name>
    <dbReference type="NCBI Taxonomy" id="10116"/>
    <lineage>
        <taxon>Eukaryota</taxon>
        <taxon>Metazoa</taxon>
        <taxon>Chordata</taxon>
        <taxon>Craniata</taxon>
        <taxon>Vertebrata</taxon>
        <taxon>Euteleostomi</taxon>
        <taxon>Mammalia</taxon>
        <taxon>Eutheria</taxon>
        <taxon>Euarchontoglires</taxon>
        <taxon>Glires</taxon>
        <taxon>Rodentia</taxon>
        <taxon>Myomorpha</taxon>
        <taxon>Muroidea</taxon>
        <taxon>Muridae</taxon>
        <taxon>Murinae</taxon>
        <taxon>Rattus</taxon>
    </lineage>
</organism>
<reference key="1">
    <citation type="journal article" date="1997" name="Biochem. Biophys. Res. Commun.">
        <title>Molecular cloning and tissue distribution of cDNA encoding a novel chemoattractant-like receptor.</title>
        <authorList>
            <person name="Owman C.S.O."/>
            <person name="LoLait S.J."/>
            <person name="Santen S."/>
            <person name="Olde B."/>
        </authorList>
    </citation>
    <scope>NUCLEOTIDE SEQUENCE [MRNA]</scope>
    <scope>TISSUE SPECIFICITY</scope>
    <source>
        <strain>Albino</strain>
        <tissue>Pituitary anterior lobe</tissue>
    </source>
</reference>
<reference key="2">
    <citation type="journal article" date="2004" name="Nature">
        <title>Genome sequence of the Brown Norway rat yields insights into mammalian evolution.</title>
        <authorList>
            <person name="Gibbs R.A."/>
            <person name="Weinstock G.M."/>
            <person name="Metzker M.L."/>
            <person name="Muzny D.M."/>
            <person name="Sodergren E.J."/>
            <person name="Scherer S."/>
            <person name="Scott G."/>
            <person name="Steffen D."/>
            <person name="Worley K.C."/>
            <person name="Burch P.E."/>
            <person name="Okwuonu G."/>
            <person name="Hines S."/>
            <person name="Lewis L."/>
            <person name="Deramo C."/>
            <person name="Delgado O."/>
            <person name="Dugan-Rocha S."/>
            <person name="Miner G."/>
            <person name="Morgan M."/>
            <person name="Hawes A."/>
            <person name="Gill R."/>
            <person name="Holt R.A."/>
            <person name="Adams M.D."/>
            <person name="Amanatides P.G."/>
            <person name="Baden-Tillson H."/>
            <person name="Barnstead M."/>
            <person name="Chin S."/>
            <person name="Evans C.A."/>
            <person name="Ferriera S."/>
            <person name="Fosler C."/>
            <person name="Glodek A."/>
            <person name="Gu Z."/>
            <person name="Jennings D."/>
            <person name="Kraft C.L."/>
            <person name="Nguyen T."/>
            <person name="Pfannkoch C.M."/>
            <person name="Sitter C."/>
            <person name="Sutton G.G."/>
            <person name="Venter J.C."/>
            <person name="Woodage T."/>
            <person name="Smith D."/>
            <person name="Lee H.-M."/>
            <person name="Gustafson E."/>
            <person name="Cahill P."/>
            <person name="Kana A."/>
            <person name="Doucette-Stamm L."/>
            <person name="Weinstock K."/>
            <person name="Fechtel K."/>
            <person name="Weiss R.B."/>
            <person name="Dunn D.M."/>
            <person name="Green E.D."/>
            <person name="Blakesley R.W."/>
            <person name="Bouffard G.G."/>
            <person name="De Jong P.J."/>
            <person name="Osoegawa K."/>
            <person name="Zhu B."/>
            <person name="Marra M."/>
            <person name="Schein J."/>
            <person name="Bosdet I."/>
            <person name="Fjell C."/>
            <person name="Jones S."/>
            <person name="Krzywinski M."/>
            <person name="Mathewson C."/>
            <person name="Siddiqui A."/>
            <person name="Wye N."/>
            <person name="McPherson J."/>
            <person name="Zhao S."/>
            <person name="Fraser C.M."/>
            <person name="Shetty J."/>
            <person name="Shatsman S."/>
            <person name="Geer K."/>
            <person name="Chen Y."/>
            <person name="Abramzon S."/>
            <person name="Nierman W.C."/>
            <person name="Havlak P.H."/>
            <person name="Chen R."/>
            <person name="Durbin K.J."/>
            <person name="Egan A."/>
            <person name="Ren Y."/>
            <person name="Song X.-Z."/>
            <person name="Li B."/>
            <person name="Liu Y."/>
            <person name="Qin X."/>
            <person name="Cawley S."/>
            <person name="Cooney A.J."/>
            <person name="D'Souza L.M."/>
            <person name="Martin K."/>
            <person name="Wu J.Q."/>
            <person name="Gonzalez-Garay M.L."/>
            <person name="Jackson A.R."/>
            <person name="Kalafus K.J."/>
            <person name="McLeod M.P."/>
            <person name="Milosavljevic A."/>
            <person name="Virk D."/>
            <person name="Volkov A."/>
            <person name="Wheeler D.A."/>
            <person name="Zhang Z."/>
            <person name="Bailey J.A."/>
            <person name="Eichler E.E."/>
            <person name="Tuzun E."/>
            <person name="Birney E."/>
            <person name="Mongin E."/>
            <person name="Ureta-Vidal A."/>
            <person name="Woodwark C."/>
            <person name="Zdobnov E."/>
            <person name="Bork P."/>
            <person name="Suyama M."/>
            <person name="Torrents D."/>
            <person name="Alexandersson M."/>
            <person name="Trask B.J."/>
            <person name="Young J.M."/>
            <person name="Huang H."/>
            <person name="Wang H."/>
            <person name="Xing H."/>
            <person name="Daniels S."/>
            <person name="Gietzen D."/>
            <person name="Schmidt J."/>
            <person name="Stevens K."/>
            <person name="Vitt U."/>
            <person name="Wingrove J."/>
            <person name="Camara F."/>
            <person name="Mar Alba M."/>
            <person name="Abril J.F."/>
            <person name="Guigo R."/>
            <person name="Smit A."/>
            <person name="Dubchak I."/>
            <person name="Rubin E.M."/>
            <person name="Couronne O."/>
            <person name="Poliakov A."/>
            <person name="Huebner N."/>
            <person name="Ganten D."/>
            <person name="Goesele C."/>
            <person name="Hummel O."/>
            <person name="Kreitler T."/>
            <person name="Lee Y.-A."/>
            <person name="Monti J."/>
            <person name="Schulz H."/>
            <person name="Zimdahl H."/>
            <person name="Himmelbauer H."/>
            <person name="Lehrach H."/>
            <person name="Jacob H.J."/>
            <person name="Bromberg S."/>
            <person name="Gullings-Handley J."/>
            <person name="Jensen-Seaman M.I."/>
            <person name="Kwitek A.E."/>
            <person name="Lazar J."/>
            <person name="Pasko D."/>
            <person name="Tonellato P.J."/>
            <person name="Twigger S."/>
            <person name="Ponting C.P."/>
            <person name="Duarte J.M."/>
            <person name="Rice S."/>
            <person name="Goodstadt L."/>
            <person name="Beatson S.A."/>
            <person name="Emes R.D."/>
            <person name="Winter E.E."/>
            <person name="Webber C."/>
            <person name="Brandt P."/>
            <person name="Nyakatura G."/>
            <person name="Adetobi M."/>
            <person name="Chiaromonte F."/>
            <person name="Elnitski L."/>
            <person name="Eswara P."/>
            <person name="Hardison R.C."/>
            <person name="Hou M."/>
            <person name="Kolbe D."/>
            <person name="Makova K."/>
            <person name="Miller W."/>
            <person name="Nekrutenko A."/>
            <person name="Riemer C."/>
            <person name="Schwartz S."/>
            <person name="Taylor J."/>
            <person name="Yang S."/>
            <person name="Zhang Y."/>
            <person name="Lindpaintner K."/>
            <person name="Andrews T.D."/>
            <person name="Caccamo M."/>
            <person name="Clamp M."/>
            <person name="Clarke L."/>
            <person name="Curwen V."/>
            <person name="Durbin R.M."/>
            <person name="Eyras E."/>
            <person name="Searle S.M."/>
            <person name="Cooper G.M."/>
            <person name="Batzoglou S."/>
            <person name="Brudno M."/>
            <person name="Sidow A."/>
            <person name="Stone E.A."/>
            <person name="Payseur B.A."/>
            <person name="Bourque G."/>
            <person name="Lopez-Otin C."/>
            <person name="Puente X.S."/>
            <person name="Chakrabarti K."/>
            <person name="Chatterji S."/>
            <person name="Dewey C."/>
            <person name="Pachter L."/>
            <person name="Bray N."/>
            <person name="Yap V.B."/>
            <person name="Caspi A."/>
            <person name="Tesler G."/>
            <person name="Pevzner P.A."/>
            <person name="Haussler D."/>
            <person name="Roskin K.M."/>
            <person name="Baertsch R."/>
            <person name="Clawson H."/>
            <person name="Furey T.S."/>
            <person name="Hinrichs A.S."/>
            <person name="Karolchik D."/>
            <person name="Kent W.J."/>
            <person name="Rosenbloom K.R."/>
            <person name="Trumbower H."/>
            <person name="Weirauch M."/>
            <person name="Cooper D.N."/>
            <person name="Stenson P.D."/>
            <person name="Ma B."/>
            <person name="Brent M."/>
            <person name="Arumugam M."/>
            <person name="Shteynberg D."/>
            <person name="Copley R.R."/>
            <person name="Taylor M.S."/>
            <person name="Riethman H."/>
            <person name="Mudunuri U."/>
            <person name="Peterson J."/>
            <person name="Guyer M."/>
            <person name="Felsenfeld A."/>
            <person name="Old S."/>
            <person name="Mockrin S."/>
            <person name="Collins F.S."/>
        </authorList>
    </citation>
    <scope>NUCLEOTIDE SEQUENCE [LARGE SCALE GENOMIC DNA]</scope>
    <source>
        <strain>Brown Norway</strain>
    </source>
</reference>
<reference key="3">
    <citation type="submission" date="2005-07" db="EMBL/GenBank/DDBJ databases">
        <authorList>
            <person name="Mural R.J."/>
            <person name="Adams M.D."/>
            <person name="Myers E.W."/>
            <person name="Smith H.O."/>
            <person name="Venter J.C."/>
        </authorList>
    </citation>
    <scope>NUCLEOTIDE SEQUENCE [LARGE SCALE GENOMIC DNA]</scope>
</reference>
<reference key="4">
    <citation type="journal article" date="2012" name="Nat. Commun.">
        <title>Quantitative maps of protein phosphorylation sites across 14 different rat organs and tissues.</title>
        <authorList>
            <person name="Lundby A."/>
            <person name="Secher A."/>
            <person name="Lage K."/>
            <person name="Nordsborg N.B."/>
            <person name="Dmytriyev A."/>
            <person name="Lundby C."/>
            <person name="Olsen J.V."/>
        </authorList>
    </citation>
    <scope>PHOSPHORYLATION [LARGE SCALE ANALYSIS] AT SER-338; THR-341; SER-348 AND SER-357</scope>
    <scope>IDENTIFICATION BY MASS SPECTROMETRY [LARGE SCALE ANALYSIS]</scope>
</reference>
<accession>O35786</accession>
<accession>G3V625</accession>
<name>CML1_RAT</name>
<dbReference type="EMBL" id="AJ002745">
    <property type="protein sequence ID" value="CAA05715.1"/>
    <property type="molecule type" value="mRNA"/>
</dbReference>
<dbReference type="EMBL" id="AC128917">
    <property type="status" value="NOT_ANNOTATED_CDS"/>
    <property type="molecule type" value="Genomic_DNA"/>
</dbReference>
<dbReference type="EMBL" id="CH473973">
    <property type="protein sequence ID" value="EDM13970.1"/>
    <property type="molecule type" value="Genomic_DNA"/>
</dbReference>
<dbReference type="EMBL" id="CH473973">
    <property type="protein sequence ID" value="EDM13971.1"/>
    <property type="molecule type" value="Genomic_DNA"/>
</dbReference>
<dbReference type="PIR" id="JC5796">
    <property type="entry name" value="JC5796"/>
</dbReference>
<dbReference type="RefSeq" id="NP_071554.2">
    <property type="nucleotide sequence ID" value="NM_022218.2"/>
</dbReference>
<dbReference type="RefSeq" id="XP_006249567.1">
    <property type="nucleotide sequence ID" value="XM_006249505.5"/>
</dbReference>
<dbReference type="RefSeq" id="XP_006249568.1">
    <property type="nucleotide sequence ID" value="XM_006249506.5"/>
</dbReference>
<dbReference type="RefSeq" id="XP_006249569.1">
    <property type="nucleotide sequence ID" value="XM_006249507.5"/>
</dbReference>
<dbReference type="RefSeq" id="XP_006249570.1">
    <property type="nucleotide sequence ID" value="XM_006249508.4"/>
</dbReference>
<dbReference type="RefSeq" id="XP_006249571.1">
    <property type="nucleotide sequence ID" value="XM_006249509.5"/>
</dbReference>
<dbReference type="SMR" id="O35786"/>
<dbReference type="FunCoup" id="O35786">
    <property type="interactions" value="634"/>
</dbReference>
<dbReference type="STRING" id="10116.ENSRNOP00000000893"/>
<dbReference type="GlyCosmos" id="O35786">
    <property type="glycosylation" value="2 sites, No reported glycans"/>
</dbReference>
<dbReference type="GlyGen" id="O35786">
    <property type="glycosylation" value="3 sites"/>
</dbReference>
<dbReference type="iPTMnet" id="O35786"/>
<dbReference type="PhosphoSitePlus" id="O35786"/>
<dbReference type="PaxDb" id="10116-ENSRNOP00000000893"/>
<dbReference type="Ensembl" id="ENSRNOT00000000893.4">
    <property type="protein sequence ID" value="ENSRNOP00000000893.2"/>
    <property type="gene ID" value="ENSRNOG00000000704.4"/>
</dbReference>
<dbReference type="Ensembl" id="ENSRNOT00000097365.1">
    <property type="protein sequence ID" value="ENSRNOP00000089521.1"/>
    <property type="gene ID" value="ENSRNOG00000000704.4"/>
</dbReference>
<dbReference type="Ensembl" id="ENSRNOT00000101222.1">
    <property type="protein sequence ID" value="ENSRNOP00000085339.1"/>
    <property type="gene ID" value="ENSRNOG00000000704.4"/>
</dbReference>
<dbReference type="Ensembl" id="ENSRNOT00000105285.1">
    <property type="protein sequence ID" value="ENSRNOP00000091942.1"/>
    <property type="gene ID" value="ENSRNOG00000000704.4"/>
</dbReference>
<dbReference type="GeneID" id="60669"/>
<dbReference type="KEGG" id="rno:60669"/>
<dbReference type="UCSC" id="RGD:69359">
    <property type="organism name" value="rat"/>
</dbReference>
<dbReference type="AGR" id="RGD:69359"/>
<dbReference type="CTD" id="1240"/>
<dbReference type="RGD" id="69359">
    <property type="gene designation" value="Cmklr1"/>
</dbReference>
<dbReference type="eggNOG" id="KOG3656">
    <property type="taxonomic scope" value="Eukaryota"/>
</dbReference>
<dbReference type="GeneTree" id="ENSGT01020000230438"/>
<dbReference type="HOGENOM" id="CLU_009579_8_0_1"/>
<dbReference type="InParanoid" id="O35786"/>
<dbReference type="OMA" id="IIMSCPS"/>
<dbReference type="OrthoDB" id="6088892at2759"/>
<dbReference type="PhylomeDB" id="O35786"/>
<dbReference type="TreeFam" id="TF330976"/>
<dbReference type="Reactome" id="R-RNO-373076">
    <property type="pathway name" value="Class A/1 (Rhodopsin-like receptors)"/>
</dbReference>
<dbReference type="PRO" id="PR:O35786"/>
<dbReference type="Proteomes" id="UP000002494">
    <property type="component" value="Chromosome 12"/>
</dbReference>
<dbReference type="Proteomes" id="UP000234681">
    <property type="component" value="Chromosome 12"/>
</dbReference>
<dbReference type="Bgee" id="ENSRNOG00000000704">
    <property type="expression patterns" value="Expressed in lung and 19 other cell types or tissues"/>
</dbReference>
<dbReference type="GO" id="GO:0005886">
    <property type="term" value="C:plasma membrane"/>
    <property type="evidence" value="ECO:0000250"/>
    <property type="project" value="UniProtKB"/>
</dbReference>
<dbReference type="GO" id="GO:0097004">
    <property type="term" value="F:adipokinetic hormone binding"/>
    <property type="evidence" value="ECO:0000250"/>
    <property type="project" value="UniProtKB"/>
</dbReference>
<dbReference type="GO" id="GO:0097003">
    <property type="term" value="F:adipokinetic hormone receptor activity"/>
    <property type="evidence" value="ECO:0000250"/>
    <property type="project" value="UniProtKB"/>
</dbReference>
<dbReference type="GO" id="GO:0004875">
    <property type="term" value="F:complement receptor activity"/>
    <property type="evidence" value="ECO:0000318"/>
    <property type="project" value="GO_Central"/>
</dbReference>
<dbReference type="GO" id="GO:0001637">
    <property type="term" value="F:G protein-coupled chemoattractant receptor activity"/>
    <property type="evidence" value="ECO:0000304"/>
    <property type="project" value="RGD"/>
</dbReference>
<dbReference type="GO" id="GO:0004930">
    <property type="term" value="F:G protein-coupled receptor activity"/>
    <property type="evidence" value="ECO:0000318"/>
    <property type="project" value="GO_Central"/>
</dbReference>
<dbReference type="GO" id="GO:0006935">
    <property type="term" value="P:chemotaxis"/>
    <property type="evidence" value="ECO:0000250"/>
    <property type="project" value="UniProtKB"/>
</dbReference>
<dbReference type="GO" id="GO:0002430">
    <property type="term" value="P:complement receptor mediated signaling pathway"/>
    <property type="evidence" value="ECO:0000318"/>
    <property type="project" value="GO_Central"/>
</dbReference>
<dbReference type="GO" id="GO:0007186">
    <property type="term" value="P:G protein-coupled receptor signaling pathway"/>
    <property type="evidence" value="ECO:0000250"/>
    <property type="project" value="UniProtKB"/>
</dbReference>
<dbReference type="GO" id="GO:0006954">
    <property type="term" value="P:inflammatory response"/>
    <property type="evidence" value="ECO:0000318"/>
    <property type="project" value="GO_Central"/>
</dbReference>
<dbReference type="GO" id="GO:0032695">
    <property type="term" value="P:negative regulation of interleukin-12 production"/>
    <property type="evidence" value="ECO:0000250"/>
    <property type="project" value="UniProtKB"/>
</dbReference>
<dbReference type="GO" id="GO:0032088">
    <property type="term" value="P:negative regulation of NF-kappaB transcription factor activity"/>
    <property type="evidence" value="ECO:0000250"/>
    <property type="project" value="UniProtKB"/>
</dbReference>
<dbReference type="GO" id="GO:0007200">
    <property type="term" value="P:phospholipase C-activating G protein-coupled receptor signaling pathway"/>
    <property type="evidence" value="ECO:0000318"/>
    <property type="project" value="GO_Central"/>
</dbReference>
<dbReference type="GO" id="GO:0120162">
    <property type="term" value="P:positive regulation of cold-induced thermogenesis"/>
    <property type="evidence" value="ECO:0000250"/>
    <property type="project" value="YuBioLab"/>
</dbReference>
<dbReference type="GO" id="GO:0007204">
    <property type="term" value="P:positive regulation of cytosolic calcium ion concentration"/>
    <property type="evidence" value="ECO:0000318"/>
    <property type="project" value="GO_Central"/>
</dbReference>
<dbReference type="GO" id="GO:0045600">
    <property type="term" value="P:positive regulation of fat cell differentiation"/>
    <property type="evidence" value="ECO:0000250"/>
    <property type="project" value="UniProtKB"/>
</dbReference>
<dbReference type="GO" id="GO:0010759">
    <property type="term" value="P:positive regulation of macrophage chemotaxis"/>
    <property type="evidence" value="ECO:0000266"/>
    <property type="project" value="RGD"/>
</dbReference>
<dbReference type="GO" id="GO:0050848">
    <property type="term" value="P:regulation of calcium-mediated signaling"/>
    <property type="evidence" value="ECO:0000250"/>
    <property type="project" value="UniProtKB"/>
</dbReference>
<dbReference type="CDD" id="cd15116">
    <property type="entry name" value="7tmA_CMKLR1"/>
    <property type="match status" value="1"/>
</dbReference>
<dbReference type="FunFam" id="1.20.1070.10:FF:000034">
    <property type="entry name" value="G-protein coupled receptor 1"/>
    <property type="match status" value="1"/>
</dbReference>
<dbReference type="Gene3D" id="1.20.1070.10">
    <property type="entry name" value="Rhodopsin 7-helix transmembrane proteins"/>
    <property type="match status" value="1"/>
</dbReference>
<dbReference type="InterPro" id="IPR002258">
    <property type="entry name" value="CML1"/>
</dbReference>
<dbReference type="InterPro" id="IPR000826">
    <property type="entry name" value="Formyl_rcpt-rel"/>
</dbReference>
<dbReference type="InterPro" id="IPR000276">
    <property type="entry name" value="GPCR_Rhodpsn"/>
</dbReference>
<dbReference type="InterPro" id="IPR017452">
    <property type="entry name" value="GPCR_Rhodpsn_7TM"/>
</dbReference>
<dbReference type="PANTHER" id="PTHR24225:SF49">
    <property type="entry name" value="CHEMERIN-LIKE RECEPTOR 1"/>
    <property type="match status" value="1"/>
</dbReference>
<dbReference type="PANTHER" id="PTHR24225">
    <property type="entry name" value="CHEMOTACTIC RECEPTOR"/>
    <property type="match status" value="1"/>
</dbReference>
<dbReference type="Pfam" id="PF00001">
    <property type="entry name" value="7tm_1"/>
    <property type="match status" value="1"/>
</dbReference>
<dbReference type="PRINTS" id="PR01126">
    <property type="entry name" value="DEZORPHANR"/>
</dbReference>
<dbReference type="PRINTS" id="PR00237">
    <property type="entry name" value="GPCRRHODOPSN"/>
</dbReference>
<dbReference type="SUPFAM" id="SSF81321">
    <property type="entry name" value="Family A G protein-coupled receptor-like"/>
    <property type="match status" value="1"/>
</dbReference>
<dbReference type="PROSITE" id="PS00237">
    <property type="entry name" value="G_PROTEIN_RECEP_F1_1"/>
    <property type="match status" value="1"/>
</dbReference>
<dbReference type="PROSITE" id="PS50262">
    <property type="entry name" value="G_PROTEIN_RECEP_F1_2"/>
    <property type="match status" value="1"/>
</dbReference>